<evidence type="ECO:0000250" key="1"/>
<evidence type="ECO:0000250" key="2">
    <source>
        <dbReference type="UniProtKB" id="P83561"/>
    </source>
</evidence>
<evidence type="ECO:0000255" key="3"/>
<evidence type="ECO:0000269" key="4">
    <source>
    </source>
</evidence>
<evidence type="ECO:0000305" key="5"/>
<evidence type="ECO:0000305" key="6">
    <source>
    </source>
</evidence>
<proteinExistence type="evidence at protein level"/>
<organism>
    <name type="scientific">Macrothele gigas</name>
    <name type="common">Japanese funnel web spider</name>
    <dbReference type="NCBI Taxonomy" id="223896"/>
    <lineage>
        <taxon>Eukaryota</taxon>
        <taxon>Metazoa</taxon>
        <taxon>Ecdysozoa</taxon>
        <taxon>Arthropoda</taxon>
        <taxon>Chelicerata</taxon>
        <taxon>Arachnida</taxon>
        <taxon>Araneae</taxon>
        <taxon>Mygalomorphae</taxon>
        <taxon>Macrothelidae</taxon>
        <taxon>Macrothele</taxon>
    </lineage>
</organism>
<comment type="function">
    <text evidence="1 4">Blocks voltage-gated sodium channels (Nav) (By similarity). Intracranial injection into mice causes lacrimation, slow breathing and death. Intrathorax injection into crickets causes death.</text>
</comment>
<comment type="subcellular location">
    <subcellularLocation>
        <location evidence="4">Secreted</location>
    </subcellularLocation>
</comment>
<comment type="tissue specificity">
    <text evidence="6">Expressed by the venom gland.</text>
</comment>
<comment type="domain">
    <text evidence="2">The presence of a 'disulfide through disulfide knot' structurally defines this protein as a knottin.</text>
</comment>
<comment type="mass spectrometry" mass="3227.1" method="MALDI" evidence="4"/>
<comment type="similarity">
    <text evidence="5">Belongs to the neurotoxin 15 family. 01 (magi-5) subfamily.</text>
</comment>
<name>TXM11_MACGS</name>
<keyword id="KW-0027">Amidation</keyword>
<keyword id="KW-1015">Disulfide bond</keyword>
<keyword id="KW-0872">Ion channel impairing toxin</keyword>
<keyword id="KW-0960">Knottin</keyword>
<keyword id="KW-0528">Neurotoxin</keyword>
<keyword id="KW-0964">Secreted</keyword>
<keyword id="KW-0732">Signal</keyword>
<keyword id="KW-0800">Toxin</keyword>
<keyword id="KW-0738">Voltage-gated sodium channel impairing toxin</keyword>
<sequence length="81" mass="9266">MKAPATIVILIMSLISVLWATADTEDGNLLFPIEDFIRKFDEYPVQPKERSCKLTFWRCKKDKECCGWNICTGLCIPPGKK</sequence>
<protein>
    <recommendedName>
        <fullName>U12-hexatoxin-Mg1a</fullName>
        <shortName>U12-HXTX-Mg1a</shortName>
    </recommendedName>
    <alternativeName>
        <fullName>Neurotoxin magi-11</fullName>
    </alternativeName>
    <alternativeName>
        <fullName>Peptide toxin 5</fullName>
    </alternativeName>
</protein>
<reference key="1">
    <citation type="journal article" date="2004" name="Toxicon">
        <title>Rapid and efficient identification of cysteine-rich peptides by random screening of a venom gland cDNA library from the hexathelid spider Macrothele gigas.</title>
        <authorList>
            <person name="Satake H."/>
            <person name="Villegas E."/>
            <person name="Oshiro N."/>
            <person name="Terada K."/>
            <person name="Shinada T."/>
            <person name="Corzo G."/>
        </authorList>
    </citation>
    <scope>NUCLEOTIDE SEQUENCE [MRNA]</scope>
    <scope>FUNCTION</scope>
    <scope>MASS SPECTROMETRY</scope>
    <scope>AMIDATION AT PRO-78</scope>
    <scope>SYNTHESIS OF 51-78</scope>
    <scope>SUBCELLULAR LOCATION</scope>
    <source>
        <tissue>Venom</tissue>
        <tissue>Venom gland</tissue>
    </source>
</reference>
<feature type="signal peptide" evidence="3">
    <location>
        <begin position="1"/>
        <end position="24"/>
    </location>
</feature>
<feature type="propeptide" id="PRO_0000284761" evidence="2">
    <location>
        <begin position="25"/>
        <end position="50"/>
    </location>
</feature>
<feature type="peptide" id="PRO_0000284762" description="U12-hexatoxin-Mg1a">
    <location>
        <begin position="51"/>
        <end position="78"/>
    </location>
</feature>
<feature type="modified residue" description="Proline amide" evidence="4">
    <location>
        <position position="78"/>
    </location>
</feature>
<feature type="disulfide bond" evidence="2">
    <location>
        <begin position="52"/>
        <end position="66"/>
    </location>
</feature>
<feature type="disulfide bond" evidence="2">
    <location>
        <begin position="59"/>
        <end position="71"/>
    </location>
</feature>
<feature type="disulfide bond" evidence="2">
    <location>
        <begin position="65"/>
        <end position="75"/>
    </location>
</feature>
<dbReference type="EMBL" id="AB121199">
    <property type="protein sequence ID" value="BAD13406.1"/>
    <property type="molecule type" value="mRNA"/>
</dbReference>
<dbReference type="SMR" id="Q75WH2"/>
<dbReference type="ArachnoServer" id="AS000363">
    <property type="toxin name" value="U12-hexatoxin-Mg1a"/>
</dbReference>
<dbReference type="GO" id="GO:0005576">
    <property type="term" value="C:extracellular region"/>
    <property type="evidence" value="ECO:0007669"/>
    <property type="project" value="UniProtKB-SubCell"/>
</dbReference>
<dbReference type="GO" id="GO:0019871">
    <property type="term" value="F:sodium channel inhibitor activity"/>
    <property type="evidence" value="ECO:0007669"/>
    <property type="project" value="InterPro"/>
</dbReference>
<dbReference type="GO" id="GO:0090729">
    <property type="term" value="F:toxin activity"/>
    <property type="evidence" value="ECO:0007669"/>
    <property type="project" value="UniProtKB-KW"/>
</dbReference>
<dbReference type="InterPro" id="IPR012628">
    <property type="entry name" value="Toxin_23"/>
</dbReference>
<dbReference type="Pfam" id="PF08093">
    <property type="entry name" value="Toxin_23"/>
    <property type="match status" value="1"/>
</dbReference>
<accession>Q75WH2</accession>